<organism>
    <name type="scientific">Buchnera aphidicola subsp. Cinara cedri (strain Cc)</name>
    <dbReference type="NCBI Taxonomy" id="372461"/>
    <lineage>
        <taxon>Bacteria</taxon>
        <taxon>Pseudomonadati</taxon>
        <taxon>Pseudomonadota</taxon>
        <taxon>Gammaproteobacteria</taxon>
        <taxon>Enterobacterales</taxon>
        <taxon>Erwiniaceae</taxon>
        <taxon>Buchnera</taxon>
    </lineage>
</organism>
<proteinExistence type="inferred from homology"/>
<keyword id="KW-0235">DNA replication</keyword>
<keyword id="KW-0614">Plasmid</keyword>
<keyword id="KW-0615">Plasmid copy control</keyword>
<keyword id="KW-1185">Reference proteome</keyword>
<accession>Q5WQ00</accession>
<comment type="function">
    <text evidence="1">This protein is essential for plasmid replication; it is involved in copy control functions.</text>
</comment>
<comment type="similarity">
    <text evidence="2">Belongs to the IncFII RepA family.</text>
</comment>
<name>REPA1_BUCCC</name>
<feature type="chain" id="PRO_0000274187" description="Probable replication-associated protein repA1">
    <location>
        <begin position="1"/>
        <end position="281"/>
    </location>
</feature>
<dbReference type="EMBL" id="AY438025">
    <property type="protein sequence ID" value="AAR99733.1"/>
    <property type="molecule type" value="Genomic_DNA"/>
</dbReference>
<dbReference type="RefSeq" id="WP_012622902.1">
    <property type="nucleotide sequence ID" value="NC_011878.1"/>
</dbReference>
<dbReference type="SMR" id="Q5WQ00"/>
<dbReference type="KEGG" id="bcc:repA1"/>
<dbReference type="eggNOG" id="ENOG5032GWB">
    <property type="taxonomic scope" value="Bacteria"/>
</dbReference>
<dbReference type="HOGENOM" id="CLU_084990_0_0_6"/>
<dbReference type="OrthoDB" id="6497710at2"/>
<dbReference type="Proteomes" id="UP000000669">
    <property type="component" value="Plasmid pLeu-BCc"/>
</dbReference>
<dbReference type="GO" id="GO:0006260">
    <property type="term" value="P:DNA replication"/>
    <property type="evidence" value="ECO:0007669"/>
    <property type="project" value="UniProtKB-KW"/>
</dbReference>
<dbReference type="GO" id="GO:0006276">
    <property type="term" value="P:plasmid maintenance"/>
    <property type="evidence" value="ECO:0007669"/>
    <property type="project" value="UniProtKB-KW"/>
</dbReference>
<dbReference type="InterPro" id="IPR003446">
    <property type="entry name" value="Plasmid_replication_init_RepA"/>
</dbReference>
<dbReference type="NCBIfam" id="NF040977">
    <property type="entry name" value="RepA_IncFII_LM"/>
    <property type="match status" value="1"/>
</dbReference>
<dbReference type="Pfam" id="PF02387">
    <property type="entry name" value="IncFII_repA"/>
    <property type="match status" value="1"/>
</dbReference>
<sequence>MFKRKKYVDNPYPKFVQPKNHKKRPAFIRYAMRCAAQTDVARNELYYTNPLKNPITGCVLHRKRRLNEHRARALRAVVQAMLYYFNIASMLVMASVEKLSDVCGLSTYSSAGNKSITRASRLITQFMEPMGLISCEKIWDKILGMYIPKIIYLKPLFFMLFDISKIRLKRVRIKQLEWINSQLKKKGEYPITLLEIEKQAKEKHIHSALLFRKSKYIIKKQKNKAKKFLELDEKYAKSYILNNLVKKYSTKELCKLGLTKLKRKVNCEYFRLKKLAQLPVV</sequence>
<evidence type="ECO:0000250" key="1"/>
<evidence type="ECO:0000305" key="2"/>
<protein>
    <recommendedName>
        <fullName>Probable replication-associated protein repA1</fullName>
    </recommendedName>
</protein>
<reference key="1">
    <citation type="journal article" date="2006" name="Gene">
        <title>Plasmids in the aphid endosymbiont Buchnera aphidicola with the smallest genomes. A puzzling evolutionary story.</title>
        <authorList>
            <person name="Gil R."/>
            <person name="Sabater-Munoz B."/>
            <person name="Perez-Brocal V."/>
            <person name="Silva F.J."/>
            <person name="Latorre A."/>
        </authorList>
    </citation>
    <scope>NUCLEOTIDE SEQUENCE [LARGE SCALE GENOMIC DNA]</scope>
    <source>
        <strain>Cc</strain>
    </source>
</reference>
<reference key="2">
    <citation type="journal article" date="2006" name="Science">
        <title>A small microbial genome: the end of a long symbiotic relationship?</title>
        <authorList>
            <person name="Perez-Brocal V."/>
            <person name="Gil R."/>
            <person name="Ramos S."/>
            <person name="Lamelas A."/>
            <person name="Postigo M."/>
            <person name="Michelena J.M."/>
            <person name="Silva F.J."/>
            <person name="Moya A."/>
            <person name="Latorre A."/>
        </authorList>
    </citation>
    <scope>NUCLEOTIDE SEQUENCE [LARGE SCALE GENOMIC DNA]</scope>
    <source>
        <strain>Cc</strain>
    </source>
</reference>
<geneLocation type="plasmid">
    <name>pLeu-BCc</name>
</geneLocation>
<gene>
    <name type="primary">repA1</name>
    <name type="ordered locus">BCc_PL2</name>
</gene>